<name>BIOB_PSEPK</name>
<evidence type="ECO:0000255" key="1">
    <source>
        <dbReference type="HAMAP-Rule" id="MF_01694"/>
    </source>
</evidence>
<evidence type="ECO:0000255" key="2">
    <source>
        <dbReference type="PROSITE-ProRule" id="PRU01266"/>
    </source>
</evidence>
<comment type="function">
    <text evidence="1">Catalyzes the conversion of dethiobiotin (DTB) to biotin by the insertion of a sulfur atom into dethiobiotin via a radical-based mechanism.</text>
</comment>
<comment type="catalytic activity">
    <reaction evidence="1">
        <text>(4R,5S)-dethiobiotin + (sulfur carrier)-SH + 2 reduced [2Fe-2S]-[ferredoxin] + 2 S-adenosyl-L-methionine = (sulfur carrier)-H + biotin + 2 5'-deoxyadenosine + 2 L-methionine + 2 oxidized [2Fe-2S]-[ferredoxin]</text>
        <dbReference type="Rhea" id="RHEA:22060"/>
        <dbReference type="Rhea" id="RHEA-COMP:10000"/>
        <dbReference type="Rhea" id="RHEA-COMP:10001"/>
        <dbReference type="Rhea" id="RHEA-COMP:14737"/>
        <dbReference type="Rhea" id="RHEA-COMP:14739"/>
        <dbReference type="ChEBI" id="CHEBI:17319"/>
        <dbReference type="ChEBI" id="CHEBI:29917"/>
        <dbReference type="ChEBI" id="CHEBI:33737"/>
        <dbReference type="ChEBI" id="CHEBI:33738"/>
        <dbReference type="ChEBI" id="CHEBI:57586"/>
        <dbReference type="ChEBI" id="CHEBI:57844"/>
        <dbReference type="ChEBI" id="CHEBI:59789"/>
        <dbReference type="ChEBI" id="CHEBI:64428"/>
        <dbReference type="ChEBI" id="CHEBI:149473"/>
        <dbReference type="EC" id="2.8.1.6"/>
    </reaction>
</comment>
<comment type="cofactor">
    <cofactor evidence="1">
        <name>[4Fe-4S] cluster</name>
        <dbReference type="ChEBI" id="CHEBI:49883"/>
    </cofactor>
    <text evidence="1">Binds 1 [4Fe-4S] cluster. The cluster is coordinated with 3 cysteines and an exchangeable S-adenosyl-L-methionine.</text>
</comment>
<comment type="cofactor">
    <cofactor evidence="1">
        <name>[2Fe-2S] cluster</name>
        <dbReference type="ChEBI" id="CHEBI:190135"/>
    </cofactor>
    <text evidence="1">Binds 1 [2Fe-2S] cluster. The cluster is coordinated with 3 cysteines and 1 arginine.</text>
</comment>
<comment type="pathway">
    <text evidence="1">Cofactor biosynthesis; biotin biosynthesis; biotin from 7,8-diaminononanoate: step 2/2.</text>
</comment>
<comment type="subunit">
    <text evidence="1">Homodimer.</text>
</comment>
<comment type="similarity">
    <text evidence="1">Belongs to the radical SAM superfamily. Biotin synthase family.</text>
</comment>
<gene>
    <name evidence="1" type="primary">bioB</name>
    <name type="ordered locus">PP_0362</name>
    <name type="ORF">PP0362</name>
</gene>
<feature type="chain" id="PRO_0000381563" description="Biotin synthase">
    <location>
        <begin position="1"/>
        <end position="352"/>
    </location>
</feature>
<feature type="domain" description="Radical SAM core" evidence="2">
    <location>
        <begin position="44"/>
        <end position="262"/>
    </location>
</feature>
<feature type="binding site" evidence="1">
    <location>
        <position position="59"/>
    </location>
    <ligand>
        <name>[4Fe-4S] cluster</name>
        <dbReference type="ChEBI" id="CHEBI:49883"/>
        <note>4Fe-4S-S-AdoMet</note>
    </ligand>
</feature>
<feature type="binding site" evidence="1">
    <location>
        <position position="63"/>
    </location>
    <ligand>
        <name>[4Fe-4S] cluster</name>
        <dbReference type="ChEBI" id="CHEBI:49883"/>
        <note>4Fe-4S-S-AdoMet</note>
    </ligand>
</feature>
<feature type="binding site" evidence="1">
    <location>
        <position position="66"/>
    </location>
    <ligand>
        <name>[4Fe-4S] cluster</name>
        <dbReference type="ChEBI" id="CHEBI:49883"/>
        <note>4Fe-4S-S-AdoMet</note>
    </ligand>
</feature>
<feature type="binding site" evidence="1">
    <location>
        <position position="103"/>
    </location>
    <ligand>
        <name>[2Fe-2S] cluster</name>
        <dbReference type="ChEBI" id="CHEBI:190135"/>
    </ligand>
</feature>
<feature type="binding site" evidence="1">
    <location>
        <position position="134"/>
    </location>
    <ligand>
        <name>[2Fe-2S] cluster</name>
        <dbReference type="ChEBI" id="CHEBI:190135"/>
    </ligand>
</feature>
<feature type="binding site" evidence="1">
    <location>
        <position position="194"/>
    </location>
    <ligand>
        <name>[2Fe-2S] cluster</name>
        <dbReference type="ChEBI" id="CHEBI:190135"/>
    </ligand>
</feature>
<feature type="binding site" evidence="1">
    <location>
        <position position="266"/>
    </location>
    <ligand>
        <name>[2Fe-2S] cluster</name>
        <dbReference type="ChEBI" id="CHEBI:190135"/>
    </ligand>
</feature>
<proteinExistence type="inferred from homology"/>
<organism>
    <name type="scientific">Pseudomonas putida (strain ATCC 47054 / DSM 6125 / CFBP 8728 / NCIMB 11950 / KT2440)</name>
    <dbReference type="NCBI Taxonomy" id="160488"/>
    <lineage>
        <taxon>Bacteria</taxon>
        <taxon>Pseudomonadati</taxon>
        <taxon>Pseudomonadota</taxon>
        <taxon>Gammaproteobacteria</taxon>
        <taxon>Pseudomonadales</taxon>
        <taxon>Pseudomonadaceae</taxon>
        <taxon>Pseudomonas</taxon>
    </lineage>
</organism>
<accession>Q88QX2</accession>
<sequence length="352" mass="38951">MSASTTATTRHDWALAEVKALFQQPFNDLLFQAQTVHRAHFDPNRVQVSTLLSIKTGACPEDCKYCPQSGHYNTGLEKQKLMEVQKVLEEAARAKAIGSTRFCMGAAWKHPSAKDMPYVLEMVKGVKAMGLETCMTLGKLDQEQTKALAQAGLDYYNHNLDTSPEFYGSIITTRTYSERLQTLAYVRDAGMKICSGGILGMGESLDDRAGLLIQLANLPEHPESVPINMLVKVAGTPLAEEEDVDPFDFIRMLAVARILMPKSHVRLSAGREQMNEQMQALAFMAGANSIFYGEKLLTTANPQADKDMQLFARLGIKPEAREEHADEVHQAAIEQALVEQRSSEMFYDAATA</sequence>
<keyword id="KW-0001">2Fe-2S</keyword>
<keyword id="KW-0004">4Fe-4S</keyword>
<keyword id="KW-0093">Biotin biosynthesis</keyword>
<keyword id="KW-0408">Iron</keyword>
<keyword id="KW-0411">Iron-sulfur</keyword>
<keyword id="KW-0479">Metal-binding</keyword>
<keyword id="KW-1185">Reference proteome</keyword>
<keyword id="KW-0949">S-adenosyl-L-methionine</keyword>
<keyword id="KW-0808">Transferase</keyword>
<dbReference type="EC" id="2.8.1.6" evidence="1"/>
<dbReference type="EMBL" id="AE015451">
    <property type="protein sequence ID" value="AAN65993.1"/>
    <property type="molecule type" value="Genomic_DNA"/>
</dbReference>
<dbReference type="RefSeq" id="NP_742529.1">
    <property type="nucleotide sequence ID" value="NC_002947.4"/>
</dbReference>
<dbReference type="RefSeq" id="WP_010951714.1">
    <property type="nucleotide sequence ID" value="NZ_CP169744.1"/>
</dbReference>
<dbReference type="SMR" id="Q88QX2"/>
<dbReference type="STRING" id="160488.PP_0362"/>
<dbReference type="PaxDb" id="160488-PP_0362"/>
<dbReference type="GeneID" id="83677639"/>
<dbReference type="KEGG" id="ppu:PP_0362"/>
<dbReference type="PATRIC" id="fig|160488.4.peg.391"/>
<dbReference type="eggNOG" id="COG0502">
    <property type="taxonomic scope" value="Bacteria"/>
</dbReference>
<dbReference type="HOGENOM" id="CLU_033172_1_2_6"/>
<dbReference type="OrthoDB" id="9786826at2"/>
<dbReference type="PhylomeDB" id="Q88QX2"/>
<dbReference type="BioCyc" id="PPUT160488:G1G01-396-MONOMER"/>
<dbReference type="UniPathway" id="UPA00078">
    <property type="reaction ID" value="UER00162"/>
</dbReference>
<dbReference type="Proteomes" id="UP000000556">
    <property type="component" value="Chromosome"/>
</dbReference>
<dbReference type="GO" id="GO:0051537">
    <property type="term" value="F:2 iron, 2 sulfur cluster binding"/>
    <property type="evidence" value="ECO:0007669"/>
    <property type="project" value="UniProtKB-KW"/>
</dbReference>
<dbReference type="GO" id="GO:0051539">
    <property type="term" value="F:4 iron, 4 sulfur cluster binding"/>
    <property type="evidence" value="ECO:0007669"/>
    <property type="project" value="UniProtKB-KW"/>
</dbReference>
<dbReference type="GO" id="GO:0004076">
    <property type="term" value="F:biotin synthase activity"/>
    <property type="evidence" value="ECO:0007669"/>
    <property type="project" value="UniProtKB-UniRule"/>
</dbReference>
<dbReference type="GO" id="GO:0005506">
    <property type="term" value="F:iron ion binding"/>
    <property type="evidence" value="ECO:0007669"/>
    <property type="project" value="UniProtKB-UniRule"/>
</dbReference>
<dbReference type="GO" id="GO:0009102">
    <property type="term" value="P:biotin biosynthetic process"/>
    <property type="evidence" value="ECO:0007669"/>
    <property type="project" value="UniProtKB-UniRule"/>
</dbReference>
<dbReference type="CDD" id="cd01335">
    <property type="entry name" value="Radical_SAM"/>
    <property type="match status" value="1"/>
</dbReference>
<dbReference type="FunFam" id="3.20.20.70:FF:000011">
    <property type="entry name" value="Biotin synthase"/>
    <property type="match status" value="1"/>
</dbReference>
<dbReference type="Gene3D" id="3.20.20.70">
    <property type="entry name" value="Aldolase class I"/>
    <property type="match status" value="1"/>
</dbReference>
<dbReference type="HAMAP" id="MF_01694">
    <property type="entry name" value="BioB"/>
    <property type="match status" value="1"/>
</dbReference>
<dbReference type="InterPro" id="IPR013785">
    <property type="entry name" value="Aldolase_TIM"/>
</dbReference>
<dbReference type="InterPro" id="IPR010722">
    <property type="entry name" value="BATS_dom"/>
</dbReference>
<dbReference type="InterPro" id="IPR002684">
    <property type="entry name" value="Biotin_synth/BioAB"/>
</dbReference>
<dbReference type="InterPro" id="IPR024177">
    <property type="entry name" value="Biotin_synthase"/>
</dbReference>
<dbReference type="InterPro" id="IPR006638">
    <property type="entry name" value="Elp3/MiaA/NifB-like_rSAM"/>
</dbReference>
<dbReference type="InterPro" id="IPR007197">
    <property type="entry name" value="rSAM"/>
</dbReference>
<dbReference type="NCBIfam" id="TIGR00433">
    <property type="entry name" value="bioB"/>
    <property type="match status" value="1"/>
</dbReference>
<dbReference type="PANTHER" id="PTHR22976">
    <property type="entry name" value="BIOTIN SYNTHASE"/>
    <property type="match status" value="1"/>
</dbReference>
<dbReference type="PANTHER" id="PTHR22976:SF2">
    <property type="entry name" value="BIOTIN SYNTHASE, MITOCHONDRIAL"/>
    <property type="match status" value="1"/>
</dbReference>
<dbReference type="Pfam" id="PF06968">
    <property type="entry name" value="BATS"/>
    <property type="match status" value="1"/>
</dbReference>
<dbReference type="Pfam" id="PF04055">
    <property type="entry name" value="Radical_SAM"/>
    <property type="match status" value="1"/>
</dbReference>
<dbReference type="PIRSF" id="PIRSF001619">
    <property type="entry name" value="Biotin_synth"/>
    <property type="match status" value="1"/>
</dbReference>
<dbReference type="SFLD" id="SFLDG01060">
    <property type="entry name" value="BATS_domain_containing"/>
    <property type="match status" value="1"/>
</dbReference>
<dbReference type="SFLD" id="SFLDF00272">
    <property type="entry name" value="biotin_synthase"/>
    <property type="match status" value="1"/>
</dbReference>
<dbReference type="SMART" id="SM00876">
    <property type="entry name" value="BATS"/>
    <property type="match status" value="1"/>
</dbReference>
<dbReference type="SMART" id="SM00729">
    <property type="entry name" value="Elp3"/>
    <property type="match status" value="1"/>
</dbReference>
<dbReference type="SUPFAM" id="SSF102114">
    <property type="entry name" value="Radical SAM enzymes"/>
    <property type="match status" value="1"/>
</dbReference>
<dbReference type="PROSITE" id="PS51918">
    <property type="entry name" value="RADICAL_SAM"/>
    <property type="match status" value="1"/>
</dbReference>
<protein>
    <recommendedName>
        <fullName evidence="1">Biotin synthase</fullName>
        <ecNumber evidence="1">2.8.1.6</ecNumber>
    </recommendedName>
</protein>
<reference key="1">
    <citation type="journal article" date="2002" name="Environ. Microbiol.">
        <title>Complete genome sequence and comparative analysis of the metabolically versatile Pseudomonas putida KT2440.</title>
        <authorList>
            <person name="Nelson K.E."/>
            <person name="Weinel C."/>
            <person name="Paulsen I.T."/>
            <person name="Dodson R.J."/>
            <person name="Hilbert H."/>
            <person name="Martins dos Santos V.A.P."/>
            <person name="Fouts D.E."/>
            <person name="Gill S.R."/>
            <person name="Pop M."/>
            <person name="Holmes M."/>
            <person name="Brinkac L.M."/>
            <person name="Beanan M.J."/>
            <person name="DeBoy R.T."/>
            <person name="Daugherty S.C."/>
            <person name="Kolonay J.F."/>
            <person name="Madupu R."/>
            <person name="Nelson W.C."/>
            <person name="White O."/>
            <person name="Peterson J.D."/>
            <person name="Khouri H.M."/>
            <person name="Hance I."/>
            <person name="Chris Lee P."/>
            <person name="Holtzapple E.K."/>
            <person name="Scanlan D."/>
            <person name="Tran K."/>
            <person name="Moazzez A."/>
            <person name="Utterback T.R."/>
            <person name="Rizzo M."/>
            <person name="Lee K."/>
            <person name="Kosack D."/>
            <person name="Moestl D."/>
            <person name="Wedler H."/>
            <person name="Lauber J."/>
            <person name="Stjepandic D."/>
            <person name="Hoheisel J."/>
            <person name="Straetz M."/>
            <person name="Heim S."/>
            <person name="Kiewitz C."/>
            <person name="Eisen J.A."/>
            <person name="Timmis K.N."/>
            <person name="Duesterhoeft A."/>
            <person name="Tuemmler B."/>
            <person name="Fraser C.M."/>
        </authorList>
    </citation>
    <scope>NUCLEOTIDE SEQUENCE [LARGE SCALE GENOMIC DNA]</scope>
    <source>
        <strain>ATCC 47054 / DSM 6125 / CFBP 8728 / NCIMB 11950 / KT2440</strain>
    </source>
</reference>